<gene>
    <name evidence="1" type="primary">ureF</name>
    <name type="ordered locus">CGSHiEE_00305</name>
</gene>
<reference key="1">
    <citation type="journal article" date="2007" name="Genome Biol.">
        <title>Characterization and modeling of the Haemophilus influenzae core and supragenomes based on the complete genomic sequences of Rd and 12 clinical nontypeable strains.</title>
        <authorList>
            <person name="Hogg J.S."/>
            <person name="Hu F.Z."/>
            <person name="Janto B."/>
            <person name="Boissy R."/>
            <person name="Hayes J."/>
            <person name="Keefe R."/>
            <person name="Post J.C."/>
            <person name="Ehrlich G.D."/>
        </authorList>
    </citation>
    <scope>NUCLEOTIDE SEQUENCE [LARGE SCALE GENOMIC DNA]</scope>
    <source>
        <strain>PittEE</strain>
    </source>
</reference>
<keyword id="KW-0143">Chaperone</keyword>
<keyword id="KW-0963">Cytoplasm</keyword>
<keyword id="KW-0996">Nickel insertion</keyword>
<organism>
    <name type="scientific">Haemophilus influenzae (strain PittEE)</name>
    <dbReference type="NCBI Taxonomy" id="374930"/>
    <lineage>
        <taxon>Bacteria</taxon>
        <taxon>Pseudomonadati</taxon>
        <taxon>Pseudomonadota</taxon>
        <taxon>Gammaproteobacteria</taxon>
        <taxon>Pasteurellales</taxon>
        <taxon>Pasteurellaceae</taxon>
        <taxon>Haemophilus</taxon>
    </lineage>
</organism>
<name>UREF_HAEIE</name>
<comment type="function">
    <text evidence="1">Required for maturation of urease via the functional incorporation of the urease nickel metallocenter.</text>
</comment>
<comment type="subunit">
    <text evidence="1">UreD, UreF and UreG form a complex that acts as a GTP-hydrolysis-dependent molecular chaperone, activating the urease apoprotein by helping to assemble the nickel containing metallocenter of UreC. The UreE protein probably delivers the nickel.</text>
</comment>
<comment type="subcellular location">
    <subcellularLocation>
        <location evidence="1">Cytoplasm</location>
    </subcellularLocation>
</comment>
<comment type="similarity">
    <text evidence="1">Belongs to the UreF family.</text>
</comment>
<proteinExistence type="inferred from homology"/>
<feature type="chain" id="PRO_1000145116" description="Urease accessory protein UreF">
    <location>
        <begin position="1"/>
        <end position="235"/>
    </location>
</feature>
<dbReference type="EMBL" id="CP000671">
    <property type="protein sequence ID" value="ABQ97559.1"/>
    <property type="molecule type" value="Genomic_DNA"/>
</dbReference>
<dbReference type="SMR" id="A5U9V8"/>
<dbReference type="KEGG" id="hip:CGSHiEE_00305"/>
<dbReference type="HOGENOM" id="CLU_049215_4_2_6"/>
<dbReference type="GO" id="GO:0005737">
    <property type="term" value="C:cytoplasm"/>
    <property type="evidence" value="ECO:0007669"/>
    <property type="project" value="UniProtKB-SubCell"/>
</dbReference>
<dbReference type="GO" id="GO:0016151">
    <property type="term" value="F:nickel cation binding"/>
    <property type="evidence" value="ECO:0007669"/>
    <property type="project" value="UniProtKB-UniRule"/>
</dbReference>
<dbReference type="Gene3D" id="1.10.4190.10">
    <property type="entry name" value="Urease accessory protein UreF"/>
    <property type="match status" value="1"/>
</dbReference>
<dbReference type="HAMAP" id="MF_01385">
    <property type="entry name" value="UreF"/>
    <property type="match status" value="1"/>
</dbReference>
<dbReference type="InterPro" id="IPR002639">
    <property type="entry name" value="UreF"/>
</dbReference>
<dbReference type="InterPro" id="IPR038277">
    <property type="entry name" value="UreF_sf"/>
</dbReference>
<dbReference type="PANTHER" id="PTHR33620">
    <property type="entry name" value="UREASE ACCESSORY PROTEIN F"/>
    <property type="match status" value="1"/>
</dbReference>
<dbReference type="PANTHER" id="PTHR33620:SF1">
    <property type="entry name" value="UREASE ACCESSORY PROTEIN F"/>
    <property type="match status" value="1"/>
</dbReference>
<dbReference type="Pfam" id="PF01730">
    <property type="entry name" value="UreF"/>
    <property type="match status" value="1"/>
</dbReference>
<dbReference type="PIRSF" id="PIRSF009467">
    <property type="entry name" value="Ureas_acces_UreF"/>
    <property type="match status" value="1"/>
</dbReference>
<accession>A5U9V8</accession>
<protein>
    <recommendedName>
        <fullName evidence="1">Urease accessory protein UreF</fullName>
    </recommendedName>
</protein>
<sequence>MAQTLNRSLTDLGALLHLVDPTLPIGGFNHSNGLETFVQQRVVESKATLEEYVQTQLLQNWIYNDGAYLSLAFDAMNEGNFDRLCELDWQLSATKVARESREGSFKLGVRLLKIFIRYETHTLLTAYQQAIAEKRVQGYFPIVFAMVAQAMGLTKADTLYAFYYNAAVGAITNGVKLIPLSQMDGQDILFDLRGSLVQAVELSLDPDEEWLGAATLANDIRAMQHEVLYTRLYMS</sequence>
<evidence type="ECO:0000255" key="1">
    <source>
        <dbReference type="HAMAP-Rule" id="MF_01385"/>
    </source>
</evidence>